<reference key="1">
    <citation type="journal article" date="2013" name="Genome Announc.">
        <title>First Insights into the Completely Annotated Genome Sequence of Bacillus licheniformis Strain 9945A.</title>
        <authorList>
            <person name="Rachinger M."/>
            <person name="Volland S."/>
            <person name="Meinhardt F."/>
            <person name="Daniel R."/>
            <person name="Liesegang H."/>
        </authorList>
    </citation>
    <scope>NUCLEOTIDE SEQUENCE [LARGE SCALE GENOMIC DNA]</scope>
    <source>
        <strain>ATCC 9945a / NCIMB 11709 / CD-2</strain>
    </source>
</reference>
<reference key="2">
    <citation type="journal article" date="2003" name="Nucleic Acids Res.">
        <title>A nomenclature for restriction enzymes, DNA methyltransferases, homing endonucleases and their genes.</title>
        <authorList>
            <person name="Roberts R.J."/>
            <person name="Belfort M."/>
            <person name="Bestor T."/>
            <person name="Bhagwat A.S."/>
            <person name="Bickle T.A."/>
            <person name="Bitinaite J."/>
            <person name="Blumenthal R.M."/>
            <person name="Degtyarev S.K."/>
            <person name="Dryden D.T."/>
            <person name="Dybvig K."/>
            <person name="Firman K."/>
            <person name="Gromova E.S."/>
            <person name="Gumport R.I."/>
            <person name="Halford S.E."/>
            <person name="Hattman S."/>
            <person name="Heitman J."/>
            <person name="Hornby D.P."/>
            <person name="Janulaitis A."/>
            <person name="Jeltsch A."/>
            <person name="Josephsen J."/>
            <person name="Kiss A."/>
            <person name="Klaenhammer T.R."/>
            <person name="Kobayashi I."/>
            <person name="Kong H."/>
            <person name="Krueger D.H."/>
            <person name="Lacks S."/>
            <person name="Marinus M.G."/>
            <person name="Miyahara M."/>
            <person name="Morgan R.D."/>
            <person name="Murray N.E."/>
            <person name="Nagaraja V."/>
            <person name="Piekarowicz A."/>
            <person name="Pingoud A."/>
            <person name="Raleigh E."/>
            <person name="Rao D.N."/>
            <person name="Reich N."/>
            <person name="Repin V.E."/>
            <person name="Selker E.U."/>
            <person name="Shaw P.C."/>
            <person name="Stein D.C."/>
            <person name="Stoddard B.L."/>
            <person name="Szybalski W."/>
            <person name="Trautner T.A."/>
            <person name="Van Etten J.L."/>
            <person name="Vitor J.M."/>
            <person name="Wilson G.G."/>
            <person name="Xu S.Y."/>
        </authorList>
    </citation>
    <scope>NOMENCLATURE</scope>
    <source>
        <strain>ATCC 9945a / NCIMB 11709 / CD-2</strain>
    </source>
</reference>
<reference key="3">
    <citation type="journal article" date="2018" name="Nat. Microbiol.">
        <title>DISARM is a widespread bacterial defence system with broad anti-phage activities.</title>
        <authorList>
            <person name="Ofir G."/>
            <person name="Melamed S."/>
            <person name="Sberro H."/>
            <person name="Mukamel Z."/>
            <person name="Silverman S."/>
            <person name="Yaakov G."/>
            <person name="Doron S."/>
            <person name="Sorek R."/>
        </authorList>
    </citation>
    <scope>FUNCTION</scope>
    <scope>CATALYTIC ACTIVITY</scope>
    <scope>DISRUPTION PHENOTYPE</scope>
    <scope>EXPRESSION IN B.SUBTILIS</scope>
    <source>
        <strain>ATCC 9945a / NCIMB 11709 / CD-2</strain>
    </source>
</reference>
<protein>
    <recommendedName>
        <fullName evidence="3">Type II methyltransferase M.Bpa9945I</fullName>
        <shortName evidence="3">M.Bpa9945I</shortName>
        <ecNumber evidence="1 2">2.1.1.37</ecNumber>
    </recommendedName>
    <alternativeName>
        <fullName evidence="4">DISARM protein DrmMII</fullName>
    </alternativeName>
</protein>
<name>MTB1_BACP9</name>
<proteinExistence type="evidence at protein level"/>
<accession>P0DW08</accession>
<gene>
    <name evidence="4" type="primary">drmMII</name>
    <name evidence="6" type="ordered locus">BaLi_c08350</name>
</gene>
<organism>
    <name type="scientific">Bacillus paralicheniformis (strain ATCC 9945a / NCIMB 11709 / CD-2)</name>
    <dbReference type="NCBI Taxonomy" id="766760"/>
    <lineage>
        <taxon>Bacteria</taxon>
        <taxon>Bacillati</taxon>
        <taxon>Bacillota</taxon>
        <taxon>Bacilli</taxon>
        <taxon>Bacillales</taxon>
        <taxon>Bacillaceae</taxon>
        <taxon>Bacillus</taxon>
    </lineage>
</organism>
<sequence length="445" mass="51787">MIVIDLFSGAGGLSEGFHKHDFKIAAHVEKEYWACETIKTRLFYHFLKAQNDLELYHEYLRVSDNYRNIEQSRAFVFQRYPELREKLEMEVLNRKFGNPHNDPTATSSTQMIQLIQNSLQYSRATSVDLIIGGPPCQAYSLVGRSRMKDSVGKDSRNYLFQYYKRIVDEFKPKAFVFENVPGILTAKQGKVYQEIKESFDQIGYTVLSGTSQEDRSNVIDFADFGVPQRRKRVILFGFQKKLNYEYPNFERHKLSWNSPLTTRDVISDLPVLKPKQGHDLRLFEYDTTQGVDQLSPYELMMREDSIGFTNHFARPIKERDAEIYQIAIEHATQGRQIKYNELPERLKTHKNEKAFLDRFKVHWWDIIPHTVVAHISKDGHYNIHPDIEQCRSLTVREAARIQGFPDNYKFEGPRTAQYTQVGNAVPPLMSGIIARAVKDVINGHH</sequence>
<dbReference type="EC" id="2.1.1.37" evidence="1 2"/>
<dbReference type="EMBL" id="CP005965">
    <property type="protein sequence ID" value="AGN35230.1"/>
    <property type="molecule type" value="Genomic_DNA"/>
</dbReference>
<dbReference type="RefSeq" id="WP_020450482.1">
    <property type="nucleotide sequence ID" value="NC_021362.1"/>
</dbReference>
<dbReference type="REBASE" id="65916">
    <property type="entry name" value="M.Bpa9945I"/>
</dbReference>
<dbReference type="KEGG" id="blh:BaLi_c08350"/>
<dbReference type="GO" id="GO:0005737">
    <property type="term" value="C:cytoplasm"/>
    <property type="evidence" value="ECO:0007669"/>
    <property type="project" value="UniProtKB-SubCell"/>
</dbReference>
<dbReference type="GO" id="GO:0003886">
    <property type="term" value="F:DNA (cytosine-5-)-methyltransferase activity"/>
    <property type="evidence" value="ECO:0007669"/>
    <property type="project" value="TreeGrafter"/>
</dbReference>
<dbReference type="GO" id="GO:0003677">
    <property type="term" value="F:DNA binding"/>
    <property type="evidence" value="ECO:0007669"/>
    <property type="project" value="TreeGrafter"/>
</dbReference>
<dbReference type="GO" id="GO:0051607">
    <property type="term" value="P:defense response to virus"/>
    <property type="evidence" value="ECO:0007669"/>
    <property type="project" value="UniProtKB-KW"/>
</dbReference>
<dbReference type="GO" id="GO:0009307">
    <property type="term" value="P:DNA restriction-modification system"/>
    <property type="evidence" value="ECO:0007669"/>
    <property type="project" value="UniProtKB-KW"/>
</dbReference>
<dbReference type="GO" id="GO:0032259">
    <property type="term" value="P:methylation"/>
    <property type="evidence" value="ECO:0007669"/>
    <property type="project" value="UniProtKB-KW"/>
</dbReference>
<dbReference type="GO" id="GO:0044027">
    <property type="term" value="P:negative regulation of gene expression via chromosomal CpG island methylation"/>
    <property type="evidence" value="ECO:0007669"/>
    <property type="project" value="TreeGrafter"/>
</dbReference>
<dbReference type="Gene3D" id="3.90.120.10">
    <property type="entry name" value="DNA Methylase, subunit A, domain 2"/>
    <property type="match status" value="1"/>
</dbReference>
<dbReference type="Gene3D" id="3.40.50.150">
    <property type="entry name" value="Vaccinia Virus protein VP39"/>
    <property type="match status" value="1"/>
</dbReference>
<dbReference type="InterPro" id="IPR050390">
    <property type="entry name" value="C5-Methyltransferase"/>
</dbReference>
<dbReference type="InterPro" id="IPR018117">
    <property type="entry name" value="C5_DNA_meth_AS"/>
</dbReference>
<dbReference type="InterPro" id="IPR001525">
    <property type="entry name" value="C5_MeTfrase"/>
</dbReference>
<dbReference type="InterPro" id="IPR031303">
    <property type="entry name" value="C5_meth_CS"/>
</dbReference>
<dbReference type="InterPro" id="IPR029063">
    <property type="entry name" value="SAM-dependent_MTases_sf"/>
</dbReference>
<dbReference type="NCBIfam" id="TIGR00675">
    <property type="entry name" value="dcm"/>
    <property type="match status" value="1"/>
</dbReference>
<dbReference type="PANTHER" id="PTHR10629">
    <property type="entry name" value="CYTOSINE-SPECIFIC METHYLTRANSFERASE"/>
    <property type="match status" value="1"/>
</dbReference>
<dbReference type="PANTHER" id="PTHR10629:SF52">
    <property type="entry name" value="DNA (CYTOSINE-5)-METHYLTRANSFERASE 1"/>
    <property type="match status" value="1"/>
</dbReference>
<dbReference type="Pfam" id="PF00145">
    <property type="entry name" value="DNA_methylase"/>
    <property type="match status" value="2"/>
</dbReference>
<dbReference type="PRINTS" id="PR00105">
    <property type="entry name" value="C5METTRFRASE"/>
</dbReference>
<dbReference type="SUPFAM" id="SSF53335">
    <property type="entry name" value="S-adenosyl-L-methionine-dependent methyltransferases"/>
    <property type="match status" value="1"/>
</dbReference>
<dbReference type="PROSITE" id="PS00094">
    <property type="entry name" value="C5_MTASE_1"/>
    <property type="match status" value="1"/>
</dbReference>
<dbReference type="PROSITE" id="PS00095">
    <property type="entry name" value="C5_MTASE_2"/>
    <property type="match status" value="1"/>
</dbReference>
<dbReference type="PROSITE" id="PS51679">
    <property type="entry name" value="SAM_MT_C5"/>
    <property type="match status" value="1"/>
</dbReference>
<evidence type="ECO:0000255" key="1">
    <source>
        <dbReference type="PROSITE-ProRule" id="PRU01016"/>
    </source>
</evidence>
<evidence type="ECO:0000269" key="2">
    <source>
    </source>
</evidence>
<evidence type="ECO:0000303" key="3">
    <source>
    </source>
</evidence>
<evidence type="ECO:0000303" key="4">
    <source>
    </source>
</evidence>
<evidence type="ECO:0000305" key="5"/>
<evidence type="ECO:0000312" key="6">
    <source>
        <dbReference type="EMBL" id="AGN35230.1"/>
    </source>
</evidence>
<comment type="function">
    <text evidence="2">Component of antiviral defense system DISARM (defense island system associated with restriction-modification), composed of DrmE, DrmA, DrmB, DrmC and DrmMII. DISARM is probably a multi-gene restriction module, this subunit is a DNA methylase. Expression of DISARM in B.subtilis (strain BEST7003) confers resistance to phages Nf, phi29, phi105, phi3T, SPO1, SPR and SPP1. Protection is over 10(7)-fold against phi3T, 10(4)-10(5)-fold against Nf, phi29, phi105 and SPR, 100-fold against SPO1 and 10-fold against SPP1. DISARM does not interfere with phage adsorption, but instead interferes with (phi3T) DNA replication early in its cycle, preventing replication, circularization and lysogeny and probably causes phage DNA degradation (DNA is degraded in SPP1-infected cells). Expression of this methylase alone leads to highly methylated phage, however they are still susceptible to the DISARM system.</text>
</comment>
<comment type="function">
    <text evidence="2">A methylase, recognizes the double-stranded sequence 5'-CCWGG-3', methylates C-2 on both strands. Phage Nf does not have any 5'-CCWGG-3' motifs but is still targeted by the DISARM system.</text>
</comment>
<comment type="catalytic activity">
    <reaction evidence="2">
        <text>a 2'-deoxycytidine in DNA + S-adenosyl-L-methionine = a 5-methyl-2'-deoxycytidine in DNA + S-adenosyl-L-homocysteine + H(+)</text>
        <dbReference type="Rhea" id="RHEA:13681"/>
        <dbReference type="Rhea" id="RHEA-COMP:11369"/>
        <dbReference type="Rhea" id="RHEA-COMP:11370"/>
        <dbReference type="ChEBI" id="CHEBI:15378"/>
        <dbReference type="ChEBI" id="CHEBI:57856"/>
        <dbReference type="ChEBI" id="CHEBI:59789"/>
        <dbReference type="ChEBI" id="CHEBI:85452"/>
        <dbReference type="ChEBI" id="CHEBI:85454"/>
        <dbReference type="EC" id="2.1.1.37"/>
    </reaction>
    <physiologicalReaction direction="left-to-right" evidence="2">
        <dbReference type="Rhea" id="RHEA:13682"/>
    </physiologicalReaction>
</comment>
<comment type="subcellular location">
    <subcellularLocation>
        <location evidence="5">Cytoplasm</location>
    </subcellularLocation>
</comment>
<comment type="disruption phenotype">
    <text evidence="2">Cannot be deleted in a DISARM-containing strain of B.subtilis.</text>
</comment>
<comment type="similarity">
    <text evidence="1">Belongs to the class I-like SAM-binding methyltransferase superfamily. C5-methyltransferase family.</text>
</comment>
<feature type="chain" id="PRO_0000456313" description="Type II methyltransferase M.Bpa9945I">
    <location>
        <begin position="1"/>
        <end position="445"/>
    </location>
</feature>
<feature type="domain" description="SAM-dependent MTase C5-type" evidence="1">
    <location>
        <begin position="1"/>
        <end position="444"/>
    </location>
</feature>
<feature type="active site" evidence="1">
    <location>
        <position position="136"/>
    </location>
</feature>
<keyword id="KW-0051">Antiviral defense</keyword>
<keyword id="KW-0963">Cytoplasm</keyword>
<keyword id="KW-0489">Methyltransferase</keyword>
<keyword id="KW-0680">Restriction system</keyword>
<keyword id="KW-0949">S-adenosyl-L-methionine</keyword>
<keyword id="KW-0808">Transferase</keyword>